<keyword id="KW-0150">Chloroplast</keyword>
<keyword id="KW-0472">Membrane</keyword>
<keyword id="KW-0602">Photosynthesis</keyword>
<keyword id="KW-0603">Photosystem I</keyword>
<keyword id="KW-0934">Plastid</keyword>
<keyword id="KW-0793">Thylakoid</keyword>
<keyword id="KW-0812">Transmembrane</keyword>
<keyword id="KW-1133">Transmembrane helix</keyword>
<protein>
    <recommendedName>
        <fullName>Photosystem I reaction center subunit PsaK</fullName>
    </recommendedName>
    <alternativeName>
        <fullName>PSI-K</fullName>
    </alternativeName>
    <alternativeName>
        <fullName>Photosystem I subunit X</fullName>
    </alternativeName>
</protein>
<organism>
    <name type="scientific">Galdieria sulphuraria</name>
    <name type="common">Red alga</name>
    <dbReference type="NCBI Taxonomy" id="130081"/>
    <lineage>
        <taxon>Eukaryota</taxon>
        <taxon>Rhodophyta</taxon>
        <taxon>Bangiophyceae</taxon>
        <taxon>Galdieriales</taxon>
        <taxon>Galdieriaceae</taxon>
        <taxon>Galdieria</taxon>
    </lineage>
</organism>
<accession>P31567</accession>
<dbReference type="EMBL" id="X57150">
    <property type="protein sequence ID" value="CAA40440.1"/>
    <property type="molecule type" value="Genomic_DNA"/>
</dbReference>
<dbReference type="SMR" id="P31567"/>
<dbReference type="GO" id="GO:0009535">
    <property type="term" value="C:chloroplast thylakoid membrane"/>
    <property type="evidence" value="ECO:0007669"/>
    <property type="project" value="UniProtKB-SubCell"/>
</dbReference>
<dbReference type="GO" id="GO:0009522">
    <property type="term" value="C:photosystem I"/>
    <property type="evidence" value="ECO:0007669"/>
    <property type="project" value="UniProtKB-KW"/>
</dbReference>
<dbReference type="GO" id="GO:0015979">
    <property type="term" value="P:photosynthesis"/>
    <property type="evidence" value="ECO:0007669"/>
    <property type="project" value="UniProtKB-UniRule"/>
</dbReference>
<dbReference type="Gene3D" id="1.20.860.20">
    <property type="entry name" value="Photosystem I PsaK, reaction centre"/>
    <property type="match status" value="1"/>
</dbReference>
<dbReference type="HAMAP" id="MF_00474">
    <property type="entry name" value="PSI_PsaK"/>
    <property type="match status" value="1"/>
</dbReference>
<dbReference type="InterPro" id="IPR035982">
    <property type="entry name" value="PSI_centre_PsaK_sf"/>
</dbReference>
<dbReference type="InterPro" id="IPR000549">
    <property type="entry name" value="PSI_PsaG/PsaK"/>
</dbReference>
<dbReference type="InterPro" id="IPR017492">
    <property type="entry name" value="PSI_PsaK"/>
</dbReference>
<dbReference type="InterPro" id="IPR037101">
    <property type="entry name" value="PSI_PsaK_bact"/>
</dbReference>
<dbReference type="Pfam" id="PF01241">
    <property type="entry name" value="PSI_PSAK"/>
    <property type="match status" value="1"/>
</dbReference>
<dbReference type="SUPFAM" id="SSF81563">
    <property type="entry name" value="Photosystem I reaction center subunit X, PsaK"/>
    <property type="match status" value="1"/>
</dbReference>
<dbReference type="PROSITE" id="PS01026">
    <property type="entry name" value="PHOTOSYSTEM_I_PSAGK"/>
    <property type="match status" value="1"/>
</dbReference>
<reference key="1">
    <citation type="journal article" date="1992" name="Plant Mol. Biol.">
        <title>Organization and expression of a phycobiliprotein gene cluster from the unicellular red alga Cyanidium caldarium.</title>
        <authorList>
            <person name="Valentin K.-U."/>
            <person name="Maid U."/>
            <person name="Emich A."/>
            <person name="Zetsche K."/>
        </authorList>
    </citation>
    <scope>NUCLEOTIDE SEQUENCE [GENOMIC DNA]</scope>
    <source>
        <strain>14-1-1 / Isolate 107.79/Goettingen</strain>
    </source>
</reference>
<name>PSAK_GALSU</name>
<proteinExistence type="inferred from homology"/>
<sequence>MLIAVSTNIIFIVVNTICVILGKYSVQNKKNESYSIANINLAELLASMSLGHIISSATVLGLKSLNLIQ</sequence>
<geneLocation type="chloroplast"/>
<gene>
    <name type="primary">psaK</name>
</gene>
<comment type="subcellular location">
    <subcellularLocation>
        <location evidence="1">Plastid</location>
        <location evidence="1">Chloroplast thylakoid membrane</location>
        <topology evidence="1">Multi-pass membrane protein</topology>
    </subcellularLocation>
</comment>
<comment type="miscellaneous">
    <text evidence="3">Although originally identified as Cyanidium caldarium, these sequences derive from Galdieria sulphuraria.</text>
</comment>
<comment type="similarity">
    <text evidence="3">Belongs to the PsaG/PsaK family.</text>
</comment>
<feature type="chain" id="PRO_0000206213" description="Photosystem I reaction center subunit PsaK">
    <location>
        <begin position="1"/>
        <end position="69"/>
    </location>
</feature>
<feature type="transmembrane region" description="Helical" evidence="2">
    <location>
        <begin position="1"/>
        <end position="21"/>
    </location>
</feature>
<feature type="transmembrane region" description="Helical" evidence="2">
    <location>
        <begin position="42"/>
        <end position="62"/>
    </location>
</feature>
<evidence type="ECO:0000250" key="1"/>
<evidence type="ECO:0000255" key="2"/>
<evidence type="ECO:0000305" key="3"/>